<evidence type="ECO:0000250" key="1">
    <source>
        <dbReference type="UniProtKB" id="Q96DW6"/>
    </source>
</evidence>
<evidence type="ECO:0000255" key="2">
    <source>
        <dbReference type="HAMAP-Rule" id="MF_03064"/>
    </source>
</evidence>
<accession>A6S8E0</accession>
<accession>A0A384JWS0</accession>
<comment type="function">
    <text evidence="2">Mitochondrial glycine transporter that imports glycine into the mitochondrial matrix. Plays an important role in providing glycine for the first enzymatic step in heme biosynthesis, the condensation of glycine with succinyl-CoA to produce 5-aminolevulinate (ALA) in the mitochondrial matrix.</text>
</comment>
<comment type="catalytic activity">
    <reaction evidence="1">
        <text>glycine(in) = glycine(out)</text>
        <dbReference type="Rhea" id="RHEA:70715"/>
        <dbReference type="ChEBI" id="CHEBI:57305"/>
    </reaction>
</comment>
<comment type="subcellular location">
    <subcellularLocation>
        <location evidence="2">Mitochondrion inner membrane</location>
        <topology evidence="2">Multi-pass membrane protein</topology>
    </subcellularLocation>
</comment>
<comment type="similarity">
    <text evidence="2">Belongs to the mitochondrial carrier (TC 2.A.29) family. SLC25A38 subfamily.</text>
</comment>
<name>S2538_BOTFB</name>
<dbReference type="EMBL" id="CP009815">
    <property type="protein sequence ID" value="ATZ54707.1"/>
    <property type="molecule type" value="Genomic_DNA"/>
</dbReference>
<dbReference type="RefSeq" id="XP_001552401.1">
    <property type="nucleotide sequence ID" value="XM_001552351.1"/>
</dbReference>
<dbReference type="SMR" id="A6S8E0"/>
<dbReference type="EnsemblFungi" id="Bcin11g00520.1">
    <property type="protein sequence ID" value="Bcin11p00520.1"/>
    <property type="gene ID" value="Bcin11g00520"/>
</dbReference>
<dbReference type="GeneID" id="5432934"/>
<dbReference type="KEGG" id="bfu:BCIN_11g00520"/>
<dbReference type="VEuPathDB" id="FungiDB:Bcin11g00520"/>
<dbReference type="OMA" id="WGIYEEL"/>
<dbReference type="OrthoDB" id="1924968at2759"/>
<dbReference type="Proteomes" id="UP000001798">
    <property type="component" value="Chromosome bcin11"/>
</dbReference>
<dbReference type="GO" id="GO:0005743">
    <property type="term" value="C:mitochondrial inner membrane"/>
    <property type="evidence" value="ECO:0007669"/>
    <property type="project" value="UniProtKB-SubCell"/>
</dbReference>
<dbReference type="GO" id="GO:0015187">
    <property type="term" value="F:glycine transmembrane transporter activity"/>
    <property type="evidence" value="ECO:0007669"/>
    <property type="project" value="UniProtKB-UniRule"/>
</dbReference>
<dbReference type="GO" id="GO:1904983">
    <property type="term" value="P:glycine import into mitochondrion"/>
    <property type="evidence" value="ECO:0007669"/>
    <property type="project" value="UniProtKB-UniRule"/>
</dbReference>
<dbReference type="GO" id="GO:0006783">
    <property type="term" value="P:heme biosynthetic process"/>
    <property type="evidence" value="ECO:0007669"/>
    <property type="project" value="EnsemblFungi"/>
</dbReference>
<dbReference type="FunFam" id="1.50.40.10:FF:000144">
    <property type="entry name" value="Mitochondrial glycine transporter"/>
    <property type="match status" value="1"/>
</dbReference>
<dbReference type="FunFam" id="1.50.40.10:FF:000173">
    <property type="entry name" value="Mitochondrial glycine transporter"/>
    <property type="match status" value="1"/>
</dbReference>
<dbReference type="Gene3D" id="1.50.40.10">
    <property type="entry name" value="Mitochondrial carrier domain"/>
    <property type="match status" value="2"/>
</dbReference>
<dbReference type="HAMAP" id="MF_03064">
    <property type="entry name" value="SLC25A38"/>
    <property type="match status" value="1"/>
</dbReference>
<dbReference type="InterPro" id="IPR030847">
    <property type="entry name" value="Hem25/SLC25A38"/>
</dbReference>
<dbReference type="InterPro" id="IPR018108">
    <property type="entry name" value="Mitochondrial_sb/sol_carrier"/>
</dbReference>
<dbReference type="InterPro" id="IPR023395">
    <property type="entry name" value="Mt_carrier_dom_sf"/>
</dbReference>
<dbReference type="PANTHER" id="PTHR46181">
    <property type="entry name" value="MITOCHONDRIAL GLYCINE TRANSPORTER"/>
    <property type="match status" value="1"/>
</dbReference>
<dbReference type="PANTHER" id="PTHR46181:SF3">
    <property type="entry name" value="MITOCHONDRIAL GLYCINE TRANSPORTER"/>
    <property type="match status" value="1"/>
</dbReference>
<dbReference type="Pfam" id="PF00153">
    <property type="entry name" value="Mito_carr"/>
    <property type="match status" value="3"/>
</dbReference>
<dbReference type="SUPFAM" id="SSF103506">
    <property type="entry name" value="Mitochondrial carrier"/>
    <property type="match status" value="1"/>
</dbReference>
<dbReference type="PROSITE" id="PS50920">
    <property type="entry name" value="SOLCAR"/>
    <property type="match status" value="3"/>
</dbReference>
<gene>
    <name type="ORF">BC1G_09631</name>
    <name type="ORF">BCIN_11g00520</name>
</gene>
<protein>
    <recommendedName>
        <fullName evidence="2">Mitochondrial glycine transporter</fullName>
    </recommendedName>
    <alternativeName>
        <fullName evidence="2">Solute carrier family 25 member 38 homolog</fullName>
    </alternativeName>
</protein>
<feature type="chain" id="PRO_0000378930" description="Mitochondrial glycine transporter">
    <location>
        <begin position="1"/>
        <end position="332"/>
    </location>
</feature>
<feature type="transmembrane region" description="Helical; Name=1" evidence="2">
    <location>
        <begin position="17"/>
        <end position="42"/>
    </location>
</feature>
<feature type="transmembrane region" description="Helical; Name=2" evidence="2">
    <location>
        <begin position="69"/>
        <end position="95"/>
    </location>
</feature>
<feature type="transmembrane region" description="Helical; Name=3" evidence="2">
    <location>
        <begin position="127"/>
        <end position="152"/>
    </location>
</feature>
<feature type="transmembrane region" description="Helical; Name=4" evidence="2">
    <location>
        <begin position="180"/>
        <end position="203"/>
    </location>
</feature>
<feature type="transmembrane region" description="Helical; Name=5" evidence="2">
    <location>
        <begin position="239"/>
        <end position="265"/>
    </location>
</feature>
<feature type="transmembrane region" description="Helical; Name=6" evidence="2">
    <location>
        <begin position="294"/>
        <end position="312"/>
    </location>
</feature>
<feature type="repeat" description="Solcar 1" evidence="2">
    <location>
        <begin position="11"/>
        <end position="94"/>
    </location>
</feature>
<feature type="repeat" description="Solcar 2" evidence="2">
    <location>
        <begin position="121"/>
        <end position="205"/>
    </location>
</feature>
<feature type="repeat" description="Solcar 3" evidence="2">
    <location>
        <begin position="235"/>
        <end position="319"/>
    </location>
</feature>
<keyword id="KW-0472">Membrane</keyword>
<keyword id="KW-0496">Mitochondrion</keyword>
<keyword id="KW-0999">Mitochondrion inner membrane</keyword>
<keyword id="KW-1185">Reference proteome</keyword>
<keyword id="KW-0677">Repeat</keyword>
<keyword id="KW-0812">Transmembrane</keyword>
<keyword id="KW-1133">Transmembrane helix</keyword>
<keyword id="KW-0813">Transport</keyword>
<organism>
    <name type="scientific">Botryotinia fuckeliana (strain B05.10)</name>
    <name type="common">Noble rot fungus</name>
    <name type="synonym">Botrytis cinerea</name>
    <dbReference type="NCBI Taxonomy" id="332648"/>
    <lineage>
        <taxon>Eukaryota</taxon>
        <taxon>Fungi</taxon>
        <taxon>Dikarya</taxon>
        <taxon>Ascomycota</taxon>
        <taxon>Pezizomycotina</taxon>
        <taxon>Leotiomycetes</taxon>
        <taxon>Helotiales</taxon>
        <taxon>Sclerotiniaceae</taxon>
        <taxon>Botrytis</taxon>
    </lineage>
</organism>
<proteinExistence type="inferred from homology"/>
<sequence>MSNGGNAGKKSSSYFHFGAGLGSGILSAVLLQPADLLKTRVQQSNHASLFTTIRELSQSPNSIRSFWRGTVPSALRTGFGSAIYFTSLNALRQNVARSNLLRTIGVVEQKSMVHSSSLPKLSNLANLTTGAVARAGAGFILMPMTIIKVRYESNLYAYKSIAGAGRDIFLTEGFRGFFSGFGATAIRDAPYAGLYVLFYEELKKRLSHIVHSSPQVEGLAEKVDLGLSKNMKGSTSASINFGSGVLAAGLATAITNPFDAIKTRIQLQPKKYTNLVMAGKKMVGEEGVKSLFDGLGLRMGRKAVSSALAWTIYEELIRRAEAVLKREKELVV</sequence>
<reference key="1">
    <citation type="journal article" date="2011" name="PLoS Genet.">
        <title>Genomic analysis of the necrotrophic fungal pathogens Sclerotinia sclerotiorum and Botrytis cinerea.</title>
        <authorList>
            <person name="Amselem J."/>
            <person name="Cuomo C.A."/>
            <person name="van Kan J.A.L."/>
            <person name="Viaud M."/>
            <person name="Benito E.P."/>
            <person name="Couloux A."/>
            <person name="Coutinho P.M."/>
            <person name="de Vries R.P."/>
            <person name="Dyer P.S."/>
            <person name="Fillinger S."/>
            <person name="Fournier E."/>
            <person name="Gout L."/>
            <person name="Hahn M."/>
            <person name="Kohn L."/>
            <person name="Lapalu N."/>
            <person name="Plummer K.M."/>
            <person name="Pradier J.-M."/>
            <person name="Quevillon E."/>
            <person name="Sharon A."/>
            <person name="Simon A."/>
            <person name="ten Have A."/>
            <person name="Tudzynski B."/>
            <person name="Tudzynski P."/>
            <person name="Wincker P."/>
            <person name="Andrew M."/>
            <person name="Anthouard V."/>
            <person name="Beever R.E."/>
            <person name="Beffa R."/>
            <person name="Benoit I."/>
            <person name="Bouzid O."/>
            <person name="Brault B."/>
            <person name="Chen Z."/>
            <person name="Choquer M."/>
            <person name="Collemare J."/>
            <person name="Cotton P."/>
            <person name="Danchin E.G."/>
            <person name="Da Silva C."/>
            <person name="Gautier A."/>
            <person name="Giraud C."/>
            <person name="Giraud T."/>
            <person name="Gonzalez C."/>
            <person name="Grossetete S."/>
            <person name="Gueldener U."/>
            <person name="Henrissat B."/>
            <person name="Howlett B.J."/>
            <person name="Kodira C."/>
            <person name="Kretschmer M."/>
            <person name="Lappartient A."/>
            <person name="Leroch M."/>
            <person name="Levis C."/>
            <person name="Mauceli E."/>
            <person name="Neuveglise C."/>
            <person name="Oeser B."/>
            <person name="Pearson M."/>
            <person name="Poulain J."/>
            <person name="Poussereau N."/>
            <person name="Quesneville H."/>
            <person name="Rascle C."/>
            <person name="Schumacher J."/>
            <person name="Segurens B."/>
            <person name="Sexton A."/>
            <person name="Silva E."/>
            <person name="Sirven C."/>
            <person name="Soanes D.M."/>
            <person name="Talbot N.J."/>
            <person name="Templeton M."/>
            <person name="Yandava C."/>
            <person name="Yarden O."/>
            <person name="Zeng Q."/>
            <person name="Rollins J.A."/>
            <person name="Lebrun M.-H."/>
            <person name="Dickman M."/>
        </authorList>
    </citation>
    <scope>NUCLEOTIDE SEQUENCE [LARGE SCALE GENOMIC DNA]</scope>
    <source>
        <strain>B05.10</strain>
    </source>
</reference>
<reference key="2">
    <citation type="journal article" date="2012" name="Eukaryot. Cell">
        <title>Genome update of Botrytis cinerea strains B05.10 and T4.</title>
        <authorList>
            <person name="Staats M."/>
            <person name="van Kan J.A.L."/>
        </authorList>
    </citation>
    <scope>NUCLEOTIDE SEQUENCE [LARGE SCALE GENOMIC DNA]</scope>
    <scope>GENOME REANNOTATION</scope>
    <source>
        <strain>B05.10</strain>
    </source>
</reference>
<reference key="3">
    <citation type="journal article" date="2017" name="Mol. Plant Pathol.">
        <title>A gapless genome sequence of the fungus Botrytis cinerea.</title>
        <authorList>
            <person name="van Kan J.A.L."/>
            <person name="Stassen J.H.M."/>
            <person name="Mosbach A."/>
            <person name="van der Lee T.A.J."/>
            <person name="Faino L."/>
            <person name="Farmer A.D."/>
            <person name="Papasotiriou D.G."/>
            <person name="Zhou S."/>
            <person name="Seidl M.F."/>
            <person name="Cottam E."/>
            <person name="Edel D."/>
            <person name="Hahn M."/>
            <person name="Schwartz D.C."/>
            <person name="Dietrich R.A."/>
            <person name="Widdison S."/>
            <person name="Scalliet G."/>
        </authorList>
    </citation>
    <scope>NUCLEOTIDE SEQUENCE [LARGE SCALE GENOMIC DNA]</scope>
    <scope>GENOME REANNOTATION</scope>
    <source>
        <strain>B05.10</strain>
    </source>
</reference>